<feature type="chain" id="PRO_0000197156" description="Esterase FrsA">
    <location>
        <begin position="1"/>
        <end position="414"/>
    </location>
</feature>
<protein>
    <recommendedName>
        <fullName evidence="1">Esterase FrsA</fullName>
        <ecNumber evidence="1">3.1.1.1</ecNumber>
    </recommendedName>
</protein>
<comment type="function">
    <text evidence="1">Catalyzes the hydrolysis of esters.</text>
</comment>
<comment type="catalytic activity">
    <reaction evidence="1">
        <text>a carboxylic ester + H2O = an alcohol + a carboxylate + H(+)</text>
        <dbReference type="Rhea" id="RHEA:21164"/>
        <dbReference type="ChEBI" id="CHEBI:15377"/>
        <dbReference type="ChEBI" id="CHEBI:15378"/>
        <dbReference type="ChEBI" id="CHEBI:29067"/>
        <dbReference type="ChEBI" id="CHEBI:30879"/>
        <dbReference type="ChEBI" id="CHEBI:33308"/>
        <dbReference type="EC" id="3.1.1.1"/>
    </reaction>
</comment>
<comment type="similarity">
    <text evidence="1">Belongs to the FrsA family.</text>
</comment>
<proteinExistence type="inferred from homology"/>
<dbReference type="EC" id="3.1.1.1" evidence="1"/>
<dbReference type="EMBL" id="AL513382">
    <property type="protein sequence ID" value="CAD08788.1"/>
    <property type="molecule type" value="Genomic_DNA"/>
</dbReference>
<dbReference type="EMBL" id="AE014613">
    <property type="protein sequence ID" value="AAO70116.1"/>
    <property type="molecule type" value="Genomic_DNA"/>
</dbReference>
<dbReference type="RefSeq" id="NP_454930.1">
    <property type="nucleotide sequence ID" value="NC_003198.1"/>
</dbReference>
<dbReference type="RefSeq" id="WP_000189584.1">
    <property type="nucleotide sequence ID" value="NZ_WSUR01000017.1"/>
</dbReference>
<dbReference type="SMR" id="Q8Z933"/>
<dbReference type="STRING" id="220341.gene:17584392"/>
<dbReference type="ESTHER" id="salty-yafa">
    <property type="family name" value="Duf_1100-R"/>
</dbReference>
<dbReference type="KEGG" id="stt:t2532"/>
<dbReference type="KEGG" id="sty:STY0363"/>
<dbReference type="PATRIC" id="fig|220341.7.peg.357"/>
<dbReference type="eggNOG" id="COG1073">
    <property type="taxonomic scope" value="Bacteria"/>
</dbReference>
<dbReference type="HOGENOM" id="CLU_036819_0_0_6"/>
<dbReference type="OMA" id="NIPWVDH"/>
<dbReference type="OrthoDB" id="5590073at2"/>
<dbReference type="Proteomes" id="UP000000541">
    <property type="component" value="Chromosome"/>
</dbReference>
<dbReference type="Proteomes" id="UP000002670">
    <property type="component" value="Chromosome"/>
</dbReference>
<dbReference type="GO" id="GO:0106435">
    <property type="term" value="F:carboxylesterase activity"/>
    <property type="evidence" value="ECO:0007669"/>
    <property type="project" value="UniProtKB-EC"/>
</dbReference>
<dbReference type="FunFam" id="3.40.50.1820:FF:000022">
    <property type="entry name" value="Esterase FrsA"/>
    <property type="match status" value="1"/>
</dbReference>
<dbReference type="Gene3D" id="3.40.50.1820">
    <property type="entry name" value="alpha/beta hydrolase"/>
    <property type="match status" value="1"/>
</dbReference>
<dbReference type="HAMAP" id="MF_01063">
    <property type="entry name" value="FrsA"/>
    <property type="match status" value="1"/>
</dbReference>
<dbReference type="InterPro" id="IPR029058">
    <property type="entry name" value="AB_hydrolase_fold"/>
</dbReference>
<dbReference type="InterPro" id="IPR043423">
    <property type="entry name" value="FrsA"/>
</dbReference>
<dbReference type="InterPro" id="IPR010520">
    <property type="entry name" value="FrsA-like"/>
</dbReference>
<dbReference type="InterPro" id="IPR050261">
    <property type="entry name" value="FrsA_esterase"/>
</dbReference>
<dbReference type="NCBIfam" id="NF003460">
    <property type="entry name" value="PRK05077.1"/>
    <property type="match status" value="1"/>
</dbReference>
<dbReference type="PANTHER" id="PTHR22946">
    <property type="entry name" value="DIENELACTONE HYDROLASE DOMAIN-CONTAINING PROTEIN-RELATED"/>
    <property type="match status" value="1"/>
</dbReference>
<dbReference type="PANTHER" id="PTHR22946:SF4">
    <property type="entry name" value="ESTERASE FRSA"/>
    <property type="match status" value="1"/>
</dbReference>
<dbReference type="Pfam" id="PF06500">
    <property type="entry name" value="FrsA-like"/>
    <property type="match status" value="1"/>
</dbReference>
<dbReference type="SUPFAM" id="SSF53474">
    <property type="entry name" value="alpha/beta-Hydrolases"/>
    <property type="match status" value="1"/>
</dbReference>
<name>FRSA_SALTI</name>
<evidence type="ECO:0000255" key="1">
    <source>
        <dbReference type="HAMAP-Rule" id="MF_01063"/>
    </source>
</evidence>
<gene>
    <name evidence="1" type="primary">frsA</name>
    <name type="ordered locus">STY0363</name>
    <name type="ordered locus">t2532</name>
</gene>
<accession>Q8Z933</accession>
<organism>
    <name type="scientific">Salmonella typhi</name>
    <dbReference type="NCBI Taxonomy" id="90370"/>
    <lineage>
        <taxon>Bacteria</taxon>
        <taxon>Pseudomonadati</taxon>
        <taxon>Pseudomonadota</taxon>
        <taxon>Gammaproteobacteria</taxon>
        <taxon>Enterobacterales</taxon>
        <taxon>Enterobacteriaceae</taxon>
        <taxon>Salmonella</taxon>
    </lineage>
</organism>
<keyword id="KW-0378">Hydrolase</keyword>
<keyword id="KW-0719">Serine esterase</keyword>
<reference key="1">
    <citation type="journal article" date="2001" name="Nature">
        <title>Complete genome sequence of a multiple drug resistant Salmonella enterica serovar Typhi CT18.</title>
        <authorList>
            <person name="Parkhill J."/>
            <person name="Dougan G."/>
            <person name="James K.D."/>
            <person name="Thomson N.R."/>
            <person name="Pickard D."/>
            <person name="Wain J."/>
            <person name="Churcher C.M."/>
            <person name="Mungall K.L."/>
            <person name="Bentley S.D."/>
            <person name="Holden M.T.G."/>
            <person name="Sebaihia M."/>
            <person name="Baker S."/>
            <person name="Basham D."/>
            <person name="Brooks K."/>
            <person name="Chillingworth T."/>
            <person name="Connerton P."/>
            <person name="Cronin A."/>
            <person name="Davis P."/>
            <person name="Davies R.M."/>
            <person name="Dowd L."/>
            <person name="White N."/>
            <person name="Farrar J."/>
            <person name="Feltwell T."/>
            <person name="Hamlin N."/>
            <person name="Haque A."/>
            <person name="Hien T.T."/>
            <person name="Holroyd S."/>
            <person name="Jagels K."/>
            <person name="Krogh A."/>
            <person name="Larsen T.S."/>
            <person name="Leather S."/>
            <person name="Moule S."/>
            <person name="O'Gaora P."/>
            <person name="Parry C."/>
            <person name="Quail M.A."/>
            <person name="Rutherford K.M."/>
            <person name="Simmonds M."/>
            <person name="Skelton J."/>
            <person name="Stevens K."/>
            <person name="Whitehead S."/>
            <person name="Barrell B.G."/>
        </authorList>
    </citation>
    <scope>NUCLEOTIDE SEQUENCE [LARGE SCALE GENOMIC DNA]</scope>
    <source>
        <strain>CT18</strain>
    </source>
</reference>
<reference key="2">
    <citation type="journal article" date="2003" name="J. Bacteriol.">
        <title>Comparative genomics of Salmonella enterica serovar Typhi strains Ty2 and CT18.</title>
        <authorList>
            <person name="Deng W."/>
            <person name="Liou S.-R."/>
            <person name="Plunkett G. III"/>
            <person name="Mayhew G.F."/>
            <person name="Rose D.J."/>
            <person name="Burland V."/>
            <person name="Kodoyianni V."/>
            <person name="Schwartz D.C."/>
            <person name="Blattner F.R."/>
        </authorList>
    </citation>
    <scope>NUCLEOTIDE SEQUENCE [LARGE SCALE GENOMIC DNA]</scope>
    <source>
        <strain>ATCC 700931 / Ty2</strain>
    </source>
</reference>
<sequence length="414" mass="47153">MTQANLSETLFKPRFKHTETSTLVRRFNRGSQPPMQSALDGKNVPHWYRMINRLMWIWRGVDPREILDVQARIVMSDAERTDDDLYDTVIGYRGGNWIYEWAKQAMDWQQKACQEQDAMRSGRYWLHASTLYNIAAYPHLKGDELAEQAQALANRAYEEAAQRLPGSLREMEFAVPGGSPVTAFLHMPKGDGPFPTVLMCGGLDAMQIDYYTLYERYFAPRGIAMLTLDMPSVGFSSKWKLTQDSSLLHQHVLKALPNVPWVDHTRVAAFGFRFGANVAVRLAYLEAPRLKAVACLGPVVHALLSDPQRQSTVPEMYLDVLASRLGMHDASDEALRVELNRYSLKVQGLLGRRCPTPMLSGFWKNDPFSPEEESRLITTSSSDGKLIEIPFNPVYRNFDHALQEITDWINHRLC</sequence>